<keyword id="KW-0963">Cytoplasm</keyword>
<keyword id="KW-0378">Hydrolase</keyword>
<keyword id="KW-0464">Manganese</keyword>
<keyword id="KW-0479">Metal-binding</keyword>
<keyword id="KW-0496">Mitochondrion</keyword>
<keyword id="KW-1185">Reference proteome</keyword>
<keyword id="KW-0809">Transit peptide</keyword>
<dbReference type="EC" id="3.4.11.9"/>
<dbReference type="EMBL" id="BC168759">
    <property type="protein sequence ID" value="AAI68759.1"/>
    <property type="molecule type" value="mRNA"/>
</dbReference>
<dbReference type="RefSeq" id="NP_001124054.2">
    <property type="nucleotide sequence ID" value="NM_001130582.2"/>
</dbReference>
<dbReference type="SMR" id="B5DEQ3"/>
<dbReference type="FunCoup" id="B5DEQ3">
    <property type="interactions" value="1162"/>
</dbReference>
<dbReference type="IntAct" id="B5DEQ3">
    <property type="interactions" value="2"/>
</dbReference>
<dbReference type="STRING" id="10116.ENSRNOP00000061709"/>
<dbReference type="MEROPS" id="M24.026"/>
<dbReference type="GlyGen" id="B5DEQ3">
    <property type="glycosylation" value="1 site"/>
</dbReference>
<dbReference type="iPTMnet" id="B5DEQ3"/>
<dbReference type="PhosphoSitePlus" id="B5DEQ3"/>
<dbReference type="PaxDb" id="10116-ENSRNOP00000061709"/>
<dbReference type="PeptideAtlas" id="B5DEQ3"/>
<dbReference type="GeneID" id="685823"/>
<dbReference type="KEGG" id="rno:685823"/>
<dbReference type="UCSC" id="RGD:1589063">
    <property type="organism name" value="rat"/>
</dbReference>
<dbReference type="AGR" id="RGD:1589063"/>
<dbReference type="CTD" id="63929"/>
<dbReference type="RGD" id="1589063">
    <property type="gene designation" value="Xpnpep3"/>
</dbReference>
<dbReference type="eggNOG" id="KOG2414">
    <property type="taxonomic scope" value="Eukaryota"/>
</dbReference>
<dbReference type="InParanoid" id="B5DEQ3"/>
<dbReference type="OrthoDB" id="4215474at2759"/>
<dbReference type="PhylomeDB" id="B5DEQ3"/>
<dbReference type="PRO" id="PR:B5DEQ3"/>
<dbReference type="Proteomes" id="UP000002494">
    <property type="component" value="Unplaced"/>
</dbReference>
<dbReference type="GO" id="GO:0005737">
    <property type="term" value="C:cytoplasm"/>
    <property type="evidence" value="ECO:0000266"/>
    <property type="project" value="RGD"/>
</dbReference>
<dbReference type="GO" id="GO:0005739">
    <property type="term" value="C:mitochondrion"/>
    <property type="evidence" value="ECO:0000266"/>
    <property type="project" value="RGD"/>
</dbReference>
<dbReference type="GO" id="GO:0004177">
    <property type="term" value="F:aminopeptidase activity"/>
    <property type="evidence" value="ECO:0000266"/>
    <property type="project" value="RGD"/>
</dbReference>
<dbReference type="GO" id="GO:0030145">
    <property type="term" value="F:manganese ion binding"/>
    <property type="evidence" value="ECO:0000266"/>
    <property type="project" value="RGD"/>
</dbReference>
<dbReference type="GO" id="GO:0070006">
    <property type="term" value="F:metalloaminopeptidase activity"/>
    <property type="evidence" value="ECO:0000266"/>
    <property type="project" value="RGD"/>
</dbReference>
<dbReference type="GO" id="GO:0042803">
    <property type="term" value="F:protein homodimerization activity"/>
    <property type="evidence" value="ECO:0000266"/>
    <property type="project" value="RGD"/>
</dbReference>
<dbReference type="GO" id="GO:0003094">
    <property type="term" value="P:glomerular filtration"/>
    <property type="evidence" value="ECO:0000266"/>
    <property type="project" value="RGD"/>
</dbReference>
<dbReference type="GO" id="GO:0016485">
    <property type="term" value="P:protein processing"/>
    <property type="evidence" value="ECO:0000266"/>
    <property type="project" value="RGD"/>
</dbReference>
<dbReference type="GO" id="GO:0006508">
    <property type="term" value="P:proteolysis"/>
    <property type="evidence" value="ECO:0000266"/>
    <property type="project" value="RGD"/>
</dbReference>
<dbReference type="CDD" id="cd01087">
    <property type="entry name" value="Prolidase"/>
    <property type="match status" value="1"/>
</dbReference>
<dbReference type="FunFam" id="3.40.350.10:FF:000013">
    <property type="entry name" value="probable Xaa-Pro aminopeptidase 3"/>
    <property type="match status" value="1"/>
</dbReference>
<dbReference type="FunFam" id="3.90.230.10:FF:000002">
    <property type="entry name" value="Xaa-Pro aminopeptidase 3"/>
    <property type="match status" value="1"/>
</dbReference>
<dbReference type="Gene3D" id="3.90.230.10">
    <property type="entry name" value="Creatinase/methionine aminopeptidase superfamily"/>
    <property type="match status" value="1"/>
</dbReference>
<dbReference type="Gene3D" id="3.40.350.10">
    <property type="entry name" value="Creatinase/prolidase N-terminal domain"/>
    <property type="match status" value="1"/>
</dbReference>
<dbReference type="InterPro" id="IPR007865">
    <property type="entry name" value="Aminopep_P_N"/>
</dbReference>
<dbReference type="InterPro" id="IPR029149">
    <property type="entry name" value="Creatin/AminoP/Spt16_N"/>
</dbReference>
<dbReference type="InterPro" id="IPR036005">
    <property type="entry name" value="Creatinase/aminopeptidase-like"/>
</dbReference>
<dbReference type="InterPro" id="IPR000994">
    <property type="entry name" value="Pept_M24"/>
</dbReference>
<dbReference type="InterPro" id="IPR052433">
    <property type="entry name" value="X-Pro_dipept-like"/>
</dbReference>
<dbReference type="PANTHER" id="PTHR43226">
    <property type="entry name" value="XAA-PRO AMINOPEPTIDASE 3"/>
    <property type="match status" value="1"/>
</dbReference>
<dbReference type="PANTHER" id="PTHR43226:SF4">
    <property type="entry name" value="XAA-PRO AMINOPEPTIDASE 3"/>
    <property type="match status" value="1"/>
</dbReference>
<dbReference type="Pfam" id="PF05195">
    <property type="entry name" value="AMP_N"/>
    <property type="match status" value="1"/>
</dbReference>
<dbReference type="Pfam" id="PF00557">
    <property type="entry name" value="Peptidase_M24"/>
    <property type="match status" value="1"/>
</dbReference>
<dbReference type="SMART" id="SM01011">
    <property type="entry name" value="AMP_N"/>
    <property type="match status" value="1"/>
</dbReference>
<dbReference type="SUPFAM" id="SSF55920">
    <property type="entry name" value="Creatinase/aminopeptidase"/>
    <property type="match status" value="1"/>
</dbReference>
<dbReference type="SUPFAM" id="SSF53092">
    <property type="entry name" value="Creatinase/prolidase N-terminal domain"/>
    <property type="match status" value="1"/>
</dbReference>
<accession>B5DEQ3</accession>
<evidence type="ECO:0000250" key="1">
    <source>
        <dbReference type="UniProtKB" id="Q9NQH7"/>
    </source>
</evidence>
<evidence type="ECO:0000255" key="2"/>
<evidence type="ECO:0000269" key="3">
    <source>
    </source>
</evidence>
<evidence type="ECO:0000305" key="4"/>
<evidence type="ECO:0000312" key="5">
    <source>
        <dbReference type="RGD" id="1589063"/>
    </source>
</evidence>
<name>XPP3_RAT</name>
<reference key="1">
    <citation type="journal article" date="2004" name="Genome Res.">
        <title>The status, quality, and expansion of the NIH full-length cDNA project: the Mammalian Gene Collection (MGC).</title>
        <authorList>
            <consortium name="The MGC Project Team"/>
        </authorList>
    </citation>
    <scope>NUCLEOTIDE SEQUENCE [LARGE SCALE MRNA]</scope>
    <source>
        <tissue>Pituitary</tissue>
    </source>
</reference>
<reference key="2">
    <citation type="journal article" date="2010" name="J. Clin. Invest.">
        <title>Individuals with mutations in XPNPEP3, which encodes a mitochondrial protein, develop a nephronophthisis-like nephropathy.</title>
        <authorList>
            <person name="O'Toole J.F."/>
            <person name="Liu Y."/>
            <person name="Davis E.E."/>
            <person name="Westlake C.J."/>
            <person name="Attanasio M."/>
            <person name="Otto E.A."/>
            <person name="Seelow D."/>
            <person name="Nurnberg G."/>
            <person name="Becker C."/>
            <person name="Nuutinen M."/>
            <person name="Karppa M."/>
            <person name="Ignatius J."/>
            <person name="Uusimaa J."/>
            <person name="Pakanen S."/>
            <person name="Jaakkola E."/>
            <person name="van den Heuvel L.P."/>
            <person name="Fehrenbach H."/>
            <person name="Wiggins R."/>
            <person name="Goyal M."/>
            <person name="Zhou W."/>
            <person name="Wolf M.T."/>
            <person name="Wise E."/>
            <person name="Helou J."/>
            <person name="Allen S.J."/>
            <person name="Murga-Zamalloa C.A."/>
            <person name="Ashraf S."/>
            <person name="Chaki M."/>
            <person name="Heeringa S."/>
            <person name="Chernin G."/>
            <person name="Hoskins B.E."/>
            <person name="Chaib H."/>
            <person name="Gleeson J."/>
            <person name="Kusakabe T."/>
            <person name="Suzuki T."/>
            <person name="Isaac R.E."/>
            <person name="Quarmby L.M."/>
            <person name="Tennant B."/>
            <person name="Fujioka H."/>
            <person name="Tuominen H."/>
            <person name="Hassinen I."/>
            <person name="Lohi H."/>
            <person name="van Houten J.L."/>
            <person name="Rotig A."/>
            <person name="Sayer J.A."/>
            <person name="Rolinski B."/>
            <person name="Freisinger P."/>
            <person name="Madhavan S.M."/>
            <person name="Herzer M."/>
            <person name="Madignier F."/>
            <person name="Prokisch H."/>
            <person name="Nurnberg P."/>
            <person name="Jackson P.K."/>
            <person name="Khanna H."/>
            <person name="Katsanis N."/>
            <person name="Hildebrandt F."/>
        </authorList>
    </citation>
    <scope>TISSUE SPECIFICITY</scope>
</reference>
<reference key="3">
    <citation type="journal article" date="2010" name="J. Clin. Invest.">
        <authorList>
            <person name="O'Toole J.F."/>
            <person name="Liu Y."/>
            <person name="Davis E.E."/>
            <person name="Westlake C.J."/>
            <person name="Attanasio M."/>
            <person name="Otto E.A."/>
            <person name="Seelow D."/>
            <person name="Nurnberg G."/>
            <person name="Becker C."/>
            <person name="Nuutinen M."/>
            <person name="Karppa M."/>
            <person name="Ignatius J."/>
            <person name="Uusimaa J."/>
            <person name="Pakanen S."/>
            <person name="Jaakkola E."/>
            <person name="van den Heuvel L.P."/>
            <person name="Fehrenbach H."/>
            <person name="Wiggins R."/>
            <person name="Goyal M."/>
            <person name="Zhou W."/>
            <person name="Wolf M.T."/>
            <person name="Wise E."/>
            <person name="Helou J."/>
            <person name="Allen S.J."/>
            <person name="Murga-Zamalloa C.A."/>
            <person name="Ashraf S."/>
            <person name="Chaki M."/>
            <person name="Heeringa S."/>
            <person name="Chernin G."/>
            <person name="Hoskins B.E."/>
            <person name="Chaib H."/>
            <person name="Gleeson J."/>
            <person name="Kusakabe T."/>
            <person name="Suzuki T."/>
            <person name="Isaac R.E."/>
            <person name="Quarmby L.M."/>
            <person name="Tennant B."/>
            <person name="Fujioka H."/>
            <person name="Tuominen H."/>
            <person name="Hassinen I."/>
            <person name="Lohi H."/>
            <person name="van Houten J.L."/>
            <person name="Rotig A."/>
            <person name="Sayer J.A."/>
            <person name="Rolinski B."/>
            <person name="Freisinger P."/>
            <person name="Madhavan S.M."/>
            <person name="Herzer M."/>
            <person name="Madignier F."/>
            <person name="Prokisch H."/>
            <person name="Nurnberg P."/>
            <person name="Jackson P.K."/>
            <person name="Khanna H."/>
            <person name="Katsanis N."/>
            <person name="Hildebrandt F."/>
        </authorList>
    </citation>
    <scope>ERRATUM OF PUBMED:20179356</scope>
</reference>
<comment type="function">
    <text evidence="1">Catalyzes the removal of a penultimate prolyl residue from the N-termini of peptides, such as Leu-Pro-Ala. Also shows low activity towards peptides with Ala or Ser at the P1 position. Promotes TNFRSF1B-mediated phosphorylation of MAPK8/JNK1 and MAPK9/JNK2, suggesting a function as an adapter protein for TNFRSF1B; the effect is independent of XPNPEP3 peptidase activity. May inhibit apoptotic cell death induced via TNF-TNFRSF1B signaling.</text>
</comment>
<comment type="catalytic activity">
    <reaction evidence="1">
        <text>Release of any N-terminal amino acid, including proline, that is linked to proline, even from a dipeptide or tripeptide.</text>
        <dbReference type="EC" id="3.4.11.9"/>
    </reaction>
</comment>
<comment type="cofactor">
    <cofactor evidence="1">
        <name>Mn(2+)</name>
        <dbReference type="ChEBI" id="CHEBI:29035"/>
    </cofactor>
    <text evidence="1">Binds 2 manganese ions per subunit.</text>
</comment>
<comment type="subunit">
    <text evidence="1">Homodimer. Interacts with TNFRSF1B/TNFR2 (activated) and TRAF2.</text>
</comment>
<comment type="subcellular location">
    <subcellularLocation>
        <location evidence="1">Mitochondrion</location>
    </subcellularLocation>
    <subcellularLocation>
        <location evidence="1">Cytoplasm</location>
    </subcellularLocation>
    <text evidence="1">Mainly mitochondrial. Translocates to the cytoplasm following TNFRSF1B activation.</text>
</comment>
<comment type="tissue specificity">
    <text evidence="3">Expressed in the kidney, specifically in intercalated cells, but not in principal cells, of the distal convoluted tubule and cortical collecting duct (at protein level).</text>
</comment>
<comment type="similarity">
    <text evidence="4">Belongs to the peptidase M24B family.</text>
</comment>
<sequence>MLSLLSTPRLVPVIARLRGLSGCMSCLQRRYSLQPVPVKEIPNRYLGQPSPVTHPHLLRPGEVTPGLSQVEYALRRHKLMALVHKEAQGHSGTDHTVVVLSNPIHYMSNDIPYTFHQDNSFLYLCGFQEPDSILVLQSCSGKQLPSHKAMLFVPRRDPGRELWDGPRSGTDGAIALTGVDDAYPLEEFQHLLPKLRAETNMVWYDWMKPSHAQLHSDYMQPLTEAKATSKNKVRSVQHLIQHLRLIKSPAEIKRMQIAGKLTSEAFIETMFASKAPVDEAFLYAKFEFECRARGADILAYPPVVAGGNRSNTLHYVKNNQLIKDGEMVLLDGGCESSCYVSDITRTWPVNGRFTAPQAELYEAVLEIQKACLTLCSPGTSLENIYSMMLTLMGQKLKDLGIIKTSKESAFKAARKYCPHHVGHYLGMDVHDTPDMPRSLPLQPGMVITVEPGIYIPEGDTDAPEKFRGLGVRIEDDVVVTQDSPLILSADCPKEVNDIEQICSRTS</sequence>
<feature type="transit peptide" description="Mitochondrion" evidence="2">
    <location>
        <begin position="1"/>
        <end position="31"/>
    </location>
</feature>
<feature type="chain" id="PRO_0000401209" description="Xaa-Pro aminopeptidase 3">
    <location>
        <begin position="32"/>
        <end position="506"/>
    </location>
</feature>
<feature type="region of interest" description="Interaction with TNFRSF1B" evidence="1">
    <location>
        <begin position="54"/>
        <end position="79"/>
    </location>
</feature>
<feature type="binding site" evidence="1">
    <location>
        <position position="300"/>
    </location>
    <ligand>
        <name>substrate</name>
    </ligand>
</feature>
<feature type="binding site" evidence="1">
    <location>
        <position position="331"/>
    </location>
    <ligand>
        <name>Mn(2+)</name>
        <dbReference type="ChEBI" id="CHEBI:29035"/>
        <label>2</label>
    </ligand>
</feature>
<feature type="binding site" evidence="1">
    <location>
        <position position="331"/>
    </location>
    <ligand>
        <name>substrate</name>
    </ligand>
</feature>
<feature type="binding site" evidence="1">
    <location>
        <position position="342"/>
    </location>
    <ligand>
        <name>Mn(2+)</name>
        <dbReference type="ChEBI" id="CHEBI:29035"/>
        <label>1</label>
    </ligand>
</feature>
<feature type="binding site" evidence="1">
    <location>
        <position position="342"/>
    </location>
    <ligand>
        <name>Mn(2+)</name>
        <dbReference type="ChEBI" id="CHEBI:29035"/>
        <label>2</label>
    </ligand>
</feature>
<feature type="binding site" evidence="1">
    <location>
        <position position="342"/>
    </location>
    <ligand>
        <name>substrate</name>
    </ligand>
</feature>
<feature type="binding site" evidence="1">
    <location>
        <position position="423"/>
    </location>
    <ligand>
        <name>Mn(2+)</name>
        <dbReference type="ChEBI" id="CHEBI:29035"/>
        <label>1</label>
    </ligand>
</feature>
<feature type="binding site" evidence="1">
    <location>
        <position position="423"/>
    </location>
    <ligand>
        <name>substrate</name>
    </ligand>
</feature>
<feature type="binding site" evidence="1">
    <location>
        <position position="430"/>
    </location>
    <ligand>
        <name>substrate</name>
    </ligand>
</feature>
<feature type="binding site" evidence="1">
    <location>
        <position position="450"/>
    </location>
    <ligand>
        <name>Mn(2+)</name>
        <dbReference type="ChEBI" id="CHEBI:29035"/>
        <label>1</label>
    </ligand>
</feature>
<feature type="binding site" evidence="1">
    <location>
        <position position="450"/>
    </location>
    <ligand>
        <name>substrate</name>
    </ligand>
</feature>
<feature type="binding site" evidence="1">
    <location>
        <position position="474"/>
    </location>
    <ligand>
        <name>Mn(2+)</name>
        <dbReference type="ChEBI" id="CHEBI:29035"/>
        <label>1</label>
    </ligand>
</feature>
<feature type="binding site" evidence="1">
    <location>
        <position position="474"/>
    </location>
    <ligand>
        <name>Mn(2+)</name>
        <dbReference type="ChEBI" id="CHEBI:29035"/>
        <label>2</label>
    </ligand>
</feature>
<feature type="binding site" evidence="1">
    <location>
        <position position="474"/>
    </location>
    <ligand>
        <name>substrate</name>
    </ligand>
</feature>
<gene>
    <name type="primary">Xpnpep3</name>
</gene>
<organism>
    <name type="scientific">Rattus norvegicus</name>
    <name type="common">Rat</name>
    <dbReference type="NCBI Taxonomy" id="10116"/>
    <lineage>
        <taxon>Eukaryota</taxon>
        <taxon>Metazoa</taxon>
        <taxon>Chordata</taxon>
        <taxon>Craniata</taxon>
        <taxon>Vertebrata</taxon>
        <taxon>Euteleostomi</taxon>
        <taxon>Mammalia</taxon>
        <taxon>Eutheria</taxon>
        <taxon>Euarchontoglires</taxon>
        <taxon>Glires</taxon>
        <taxon>Rodentia</taxon>
        <taxon>Myomorpha</taxon>
        <taxon>Muroidea</taxon>
        <taxon>Muridae</taxon>
        <taxon>Murinae</taxon>
        <taxon>Rattus</taxon>
    </lineage>
</organism>
<protein>
    <recommendedName>
        <fullName evidence="5">Xaa-Pro aminopeptidase 3</fullName>
        <shortName>X-Pro aminopeptidase 3</shortName>
        <ecNumber>3.4.11.9</ecNumber>
    </recommendedName>
    <alternativeName>
        <fullName>Aminopeptidase P3</fullName>
        <shortName>APP3</shortName>
    </alternativeName>
</protein>
<proteinExistence type="evidence at protein level"/>